<dbReference type="EMBL" id="CP001215">
    <property type="protein sequence ID" value="ACP15611.1"/>
    <property type="molecule type" value="Genomic_DNA"/>
</dbReference>
<dbReference type="RefSeq" id="WP_000036339.1">
    <property type="nucleotide sequence ID" value="NC_012581.1"/>
</dbReference>
<dbReference type="SMR" id="C3L7B4"/>
<dbReference type="GeneID" id="45023641"/>
<dbReference type="KEGG" id="bah:BAMEG_0681"/>
<dbReference type="HOGENOM" id="CLU_006301_5_1_9"/>
<dbReference type="GO" id="GO:0005829">
    <property type="term" value="C:cytosol"/>
    <property type="evidence" value="ECO:0007669"/>
    <property type="project" value="TreeGrafter"/>
</dbReference>
<dbReference type="GO" id="GO:0005525">
    <property type="term" value="F:GTP binding"/>
    <property type="evidence" value="ECO:0007669"/>
    <property type="project" value="UniProtKB-KW"/>
</dbReference>
<dbReference type="GO" id="GO:0003924">
    <property type="term" value="F:GTPase activity"/>
    <property type="evidence" value="ECO:0007669"/>
    <property type="project" value="UniProtKB-UniRule"/>
</dbReference>
<dbReference type="GO" id="GO:0003743">
    <property type="term" value="F:translation initiation factor activity"/>
    <property type="evidence" value="ECO:0007669"/>
    <property type="project" value="UniProtKB-UniRule"/>
</dbReference>
<dbReference type="CDD" id="cd01887">
    <property type="entry name" value="IF2_eIF5B"/>
    <property type="match status" value="1"/>
</dbReference>
<dbReference type="CDD" id="cd03702">
    <property type="entry name" value="IF2_mtIF2_II"/>
    <property type="match status" value="1"/>
</dbReference>
<dbReference type="CDD" id="cd03692">
    <property type="entry name" value="mtIF2_IVc"/>
    <property type="match status" value="1"/>
</dbReference>
<dbReference type="FunFam" id="1.10.10.2480:FF:000001">
    <property type="entry name" value="Translation initiation factor IF-2"/>
    <property type="match status" value="1"/>
</dbReference>
<dbReference type="FunFam" id="2.40.30.10:FF:000007">
    <property type="entry name" value="Translation initiation factor IF-2"/>
    <property type="match status" value="1"/>
</dbReference>
<dbReference type="FunFam" id="2.40.30.10:FF:000008">
    <property type="entry name" value="Translation initiation factor IF-2"/>
    <property type="match status" value="1"/>
</dbReference>
<dbReference type="FunFam" id="3.40.50.10050:FF:000001">
    <property type="entry name" value="Translation initiation factor IF-2"/>
    <property type="match status" value="1"/>
</dbReference>
<dbReference type="FunFam" id="3.40.50.300:FF:000019">
    <property type="entry name" value="Translation initiation factor IF-2"/>
    <property type="match status" value="1"/>
</dbReference>
<dbReference type="Gene3D" id="1.10.10.2480">
    <property type="match status" value="1"/>
</dbReference>
<dbReference type="Gene3D" id="3.40.50.300">
    <property type="entry name" value="P-loop containing nucleotide triphosphate hydrolases"/>
    <property type="match status" value="1"/>
</dbReference>
<dbReference type="Gene3D" id="2.40.30.10">
    <property type="entry name" value="Translation factors"/>
    <property type="match status" value="2"/>
</dbReference>
<dbReference type="Gene3D" id="3.40.50.10050">
    <property type="entry name" value="Translation initiation factor IF- 2, domain 3"/>
    <property type="match status" value="1"/>
</dbReference>
<dbReference type="HAMAP" id="MF_00100_B">
    <property type="entry name" value="IF_2_B"/>
    <property type="match status" value="1"/>
</dbReference>
<dbReference type="InterPro" id="IPR053905">
    <property type="entry name" value="EF-G-like_DII"/>
</dbReference>
<dbReference type="InterPro" id="IPR044145">
    <property type="entry name" value="IF2_II"/>
</dbReference>
<dbReference type="InterPro" id="IPR006847">
    <property type="entry name" value="IF2_N"/>
</dbReference>
<dbReference type="InterPro" id="IPR027417">
    <property type="entry name" value="P-loop_NTPase"/>
</dbReference>
<dbReference type="InterPro" id="IPR005225">
    <property type="entry name" value="Small_GTP-bd"/>
</dbReference>
<dbReference type="InterPro" id="IPR000795">
    <property type="entry name" value="T_Tr_GTP-bd_dom"/>
</dbReference>
<dbReference type="InterPro" id="IPR000178">
    <property type="entry name" value="TF_IF2_bacterial-like"/>
</dbReference>
<dbReference type="InterPro" id="IPR015760">
    <property type="entry name" value="TIF_IF2"/>
</dbReference>
<dbReference type="InterPro" id="IPR023115">
    <property type="entry name" value="TIF_IF2_dom3"/>
</dbReference>
<dbReference type="InterPro" id="IPR036925">
    <property type="entry name" value="TIF_IF2_dom3_sf"/>
</dbReference>
<dbReference type="InterPro" id="IPR009000">
    <property type="entry name" value="Transl_B-barrel_sf"/>
</dbReference>
<dbReference type="NCBIfam" id="TIGR00487">
    <property type="entry name" value="IF-2"/>
    <property type="match status" value="1"/>
</dbReference>
<dbReference type="NCBIfam" id="TIGR00231">
    <property type="entry name" value="small_GTP"/>
    <property type="match status" value="1"/>
</dbReference>
<dbReference type="PANTHER" id="PTHR43381:SF5">
    <property type="entry name" value="TR-TYPE G DOMAIN-CONTAINING PROTEIN"/>
    <property type="match status" value="1"/>
</dbReference>
<dbReference type="PANTHER" id="PTHR43381">
    <property type="entry name" value="TRANSLATION INITIATION FACTOR IF-2-RELATED"/>
    <property type="match status" value="1"/>
</dbReference>
<dbReference type="Pfam" id="PF22042">
    <property type="entry name" value="EF-G_D2"/>
    <property type="match status" value="1"/>
</dbReference>
<dbReference type="Pfam" id="PF00009">
    <property type="entry name" value="GTP_EFTU"/>
    <property type="match status" value="1"/>
</dbReference>
<dbReference type="Pfam" id="PF11987">
    <property type="entry name" value="IF-2"/>
    <property type="match status" value="1"/>
</dbReference>
<dbReference type="Pfam" id="PF04760">
    <property type="entry name" value="IF2_N"/>
    <property type="match status" value="2"/>
</dbReference>
<dbReference type="SUPFAM" id="SSF52156">
    <property type="entry name" value="Initiation factor IF2/eIF5b, domain 3"/>
    <property type="match status" value="1"/>
</dbReference>
<dbReference type="SUPFAM" id="SSF52540">
    <property type="entry name" value="P-loop containing nucleoside triphosphate hydrolases"/>
    <property type="match status" value="1"/>
</dbReference>
<dbReference type="SUPFAM" id="SSF50447">
    <property type="entry name" value="Translation proteins"/>
    <property type="match status" value="2"/>
</dbReference>
<dbReference type="PROSITE" id="PS51722">
    <property type="entry name" value="G_TR_2"/>
    <property type="match status" value="1"/>
</dbReference>
<dbReference type="PROSITE" id="PS01176">
    <property type="entry name" value="IF2"/>
    <property type="match status" value="1"/>
</dbReference>
<comment type="function">
    <text evidence="2">One of the essential components for the initiation of protein synthesis. Protects formylmethionyl-tRNA from spontaneous hydrolysis and promotes its binding to the 30S ribosomal subunits. Also involved in the hydrolysis of GTP during the formation of the 70S ribosomal complex.</text>
</comment>
<comment type="subcellular location">
    <subcellularLocation>
        <location evidence="2">Cytoplasm</location>
    </subcellularLocation>
</comment>
<comment type="similarity">
    <text evidence="2">Belongs to the TRAFAC class translation factor GTPase superfamily. Classic translation factor GTPase family. IF-2 subfamily.</text>
</comment>
<feature type="chain" id="PRO_1000118747" description="Translation initiation factor IF-2">
    <location>
        <begin position="1"/>
        <end position="686"/>
    </location>
</feature>
<feature type="domain" description="tr-type G">
    <location>
        <begin position="188"/>
        <end position="357"/>
    </location>
</feature>
<feature type="region of interest" description="Disordered" evidence="3">
    <location>
        <begin position="54"/>
        <end position="105"/>
    </location>
</feature>
<feature type="region of interest" description="G1" evidence="1">
    <location>
        <begin position="197"/>
        <end position="204"/>
    </location>
</feature>
<feature type="region of interest" description="G2" evidence="1">
    <location>
        <begin position="222"/>
        <end position="226"/>
    </location>
</feature>
<feature type="region of interest" description="G3" evidence="1">
    <location>
        <begin position="243"/>
        <end position="246"/>
    </location>
</feature>
<feature type="region of interest" description="G4" evidence="1">
    <location>
        <begin position="297"/>
        <end position="300"/>
    </location>
</feature>
<feature type="region of interest" description="G5" evidence="1">
    <location>
        <begin position="333"/>
        <end position="335"/>
    </location>
</feature>
<feature type="compositionally biased region" description="Basic residues" evidence="3">
    <location>
        <begin position="69"/>
        <end position="81"/>
    </location>
</feature>
<feature type="binding site" evidence="2">
    <location>
        <begin position="197"/>
        <end position="204"/>
    </location>
    <ligand>
        <name>GTP</name>
        <dbReference type="ChEBI" id="CHEBI:37565"/>
    </ligand>
</feature>
<feature type="binding site" evidence="2">
    <location>
        <begin position="243"/>
        <end position="247"/>
    </location>
    <ligand>
        <name>GTP</name>
        <dbReference type="ChEBI" id="CHEBI:37565"/>
    </ligand>
</feature>
<feature type="binding site" evidence="2">
    <location>
        <begin position="297"/>
        <end position="300"/>
    </location>
    <ligand>
        <name>GTP</name>
        <dbReference type="ChEBI" id="CHEBI:37565"/>
    </ligand>
</feature>
<reference key="1">
    <citation type="submission" date="2008-10" db="EMBL/GenBank/DDBJ databases">
        <title>Genome sequence of Bacillus anthracis str. CDC 684.</title>
        <authorList>
            <person name="Dodson R.J."/>
            <person name="Munk A.C."/>
            <person name="Brettin T."/>
            <person name="Bruce D."/>
            <person name="Detter C."/>
            <person name="Tapia R."/>
            <person name="Han C."/>
            <person name="Sutton G."/>
            <person name="Sims D."/>
        </authorList>
    </citation>
    <scope>NUCLEOTIDE SEQUENCE [LARGE SCALE GENOMIC DNA]</scope>
    <source>
        <strain>CDC 684 / NRRL 3495</strain>
    </source>
</reference>
<gene>
    <name evidence="2" type="primary">infB</name>
    <name type="ordered locus">BAMEG_0681</name>
</gene>
<proteinExistence type="inferred from homology"/>
<accession>C3L7B4</accession>
<keyword id="KW-0963">Cytoplasm</keyword>
<keyword id="KW-0342">GTP-binding</keyword>
<keyword id="KW-0396">Initiation factor</keyword>
<keyword id="KW-0547">Nucleotide-binding</keyword>
<keyword id="KW-0648">Protein biosynthesis</keyword>
<name>IF2_BACAC</name>
<sequence>MSKIRVHEYAKKHNISSKDLMTKLKEMNIEVSNHMTMLDDEVVNKLDNEYQAEKPSVADEFEVEEKVVRSKKNSNKKKKKGKGNEDKRQENFAGRQQTQTVETPDKITFSGSLTVGDLAKKLSKEPSEIIKKLFMLGIMATINQDLDKDTIELIANDYGIEVEEEVIVSETEFETFIDEQDDEENLKERPAVVTIMGHVDHGKTTLLDSIRNSKVTAGEAGGITQHIGAYQVELNDKKITFLDTPGHAAFTTMRARGAQVTDITIIVVAADDGVMPQTVEAINHAKAAGVPIIVAVNKMDKPAANPDRVMQELTEYELVPEAWGGDTIFVPISAIQGEGIDNLLEMILLISEVEEYKANPNRYATGTVIEAQLDKGKGTIATLLVQNGTLRVGDPIVVGTSFGRVRAMVSDIGRRVKVAGPSTPVEITGLNEVPQAGDRFMAFADEKKARQIGESRAQEALLAQRGEKSKLSLEDLFQQIQEGDVKEINLIVKADVQGSVEAMAASLRKIDVEGVKVKIIHTGVGAITESDIILASASNAIVIGFNVRPDVNAKRTAELENVDIRLHRIIYKVIEEIEAAMQGMLDPEFEEKVIGQAEVRQTFKVTKVGTIAGCYVTDGKITRDSGVRIIRDGVVIFEGQLDTLKRFKDDVKEVAQNYECGITIERYNDLKEGDIIEAYIMEEVKR</sequence>
<protein>
    <recommendedName>
        <fullName evidence="2">Translation initiation factor IF-2</fullName>
    </recommendedName>
</protein>
<evidence type="ECO:0000250" key="1"/>
<evidence type="ECO:0000255" key="2">
    <source>
        <dbReference type="HAMAP-Rule" id="MF_00100"/>
    </source>
</evidence>
<evidence type="ECO:0000256" key="3">
    <source>
        <dbReference type="SAM" id="MobiDB-lite"/>
    </source>
</evidence>
<organism>
    <name type="scientific">Bacillus anthracis (strain CDC 684 / NRRL 3495)</name>
    <dbReference type="NCBI Taxonomy" id="568206"/>
    <lineage>
        <taxon>Bacteria</taxon>
        <taxon>Bacillati</taxon>
        <taxon>Bacillota</taxon>
        <taxon>Bacilli</taxon>
        <taxon>Bacillales</taxon>
        <taxon>Bacillaceae</taxon>
        <taxon>Bacillus</taxon>
        <taxon>Bacillus cereus group</taxon>
    </lineage>
</organism>